<accession>Q7G4P2</accession>
<accession>A0A0P0XTG3</accession>
<accession>B9G7U8</accession>
<accession>Q53QX1</accession>
<protein>
    <recommendedName>
        <fullName>Long chain base biosynthesis protein 1c</fullName>
        <ecNumber>2.3.1.50</ecNumber>
    </recommendedName>
</protein>
<evidence type="ECO:0000250" key="1"/>
<evidence type="ECO:0000255" key="2"/>
<evidence type="ECO:0000305" key="3"/>
<reference key="1">
    <citation type="journal article" date="2003" name="Science">
        <title>In-depth view of structure, activity, and evolution of rice chromosome 10.</title>
        <authorList>
            <person name="Yu Y."/>
            <person name="Rambo T."/>
            <person name="Currie J."/>
            <person name="Saski C."/>
            <person name="Kim H.-R."/>
            <person name="Collura K."/>
            <person name="Thompson S."/>
            <person name="Simmons J."/>
            <person name="Yang T.-J."/>
            <person name="Nah G."/>
            <person name="Patel A.J."/>
            <person name="Thurmond S."/>
            <person name="Henry D."/>
            <person name="Oates R."/>
            <person name="Palmer M."/>
            <person name="Pries G."/>
            <person name="Gibson J."/>
            <person name="Anderson H."/>
            <person name="Paradkar M."/>
            <person name="Crane L."/>
            <person name="Dale J."/>
            <person name="Carver M.B."/>
            <person name="Wood T."/>
            <person name="Frisch D."/>
            <person name="Engler F."/>
            <person name="Soderlund C."/>
            <person name="Palmer L.E."/>
            <person name="Teytelman L."/>
            <person name="Nascimento L."/>
            <person name="De la Bastide M."/>
            <person name="Spiegel L."/>
            <person name="Ware D."/>
            <person name="O'Shaughnessy A."/>
            <person name="Dike S."/>
            <person name="Dedhia N."/>
            <person name="Preston R."/>
            <person name="Huang E."/>
            <person name="Ferraro K."/>
            <person name="Kuit K."/>
            <person name="Miller B."/>
            <person name="Zutavern T."/>
            <person name="Katzenberger F."/>
            <person name="Muller S."/>
            <person name="Balija V."/>
            <person name="Martienssen R.A."/>
            <person name="Stein L."/>
            <person name="Minx P."/>
            <person name="Johnson D."/>
            <person name="Cordum H."/>
            <person name="Mardis E."/>
            <person name="Cheng Z."/>
            <person name="Jiang J."/>
            <person name="Wilson R."/>
            <person name="McCombie W.R."/>
            <person name="Wing R.A."/>
            <person name="Yuan Q."/>
            <person name="Ouyang S."/>
            <person name="Liu J."/>
            <person name="Jones K.M."/>
            <person name="Gansberger K."/>
            <person name="Moffat K."/>
            <person name="Hill J."/>
            <person name="Tsitrin T."/>
            <person name="Overton L."/>
            <person name="Bera J."/>
            <person name="Kim M."/>
            <person name="Jin S."/>
            <person name="Tallon L."/>
            <person name="Ciecko A."/>
            <person name="Pai G."/>
            <person name="Van Aken S."/>
            <person name="Utterback T."/>
            <person name="Reidmuller S."/>
            <person name="Bormann J."/>
            <person name="Feldblyum T."/>
            <person name="Hsiao J."/>
            <person name="Zismann V."/>
            <person name="Blunt S."/>
            <person name="de Vazeille A.R."/>
            <person name="Shaffer T."/>
            <person name="Koo H."/>
            <person name="Suh B."/>
            <person name="Yang Q."/>
            <person name="Haas B."/>
            <person name="Peterson J."/>
            <person name="Pertea M."/>
            <person name="Volfovsky N."/>
            <person name="Wortman J."/>
            <person name="White O."/>
            <person name="Salzberg S.L."/>
            <person name="Fraser C.M."/>
            <person name="Buell C.R."/>
            <person name="Messing J."/>
            <person name="Song R."/>
            <person name="Fuks G."/>
            <person name="Llaca V."/>
            <person name="Kovchak S."/>
            <person name="Young S."/>
            <person name="Bowers J.E."/>
            <person name="Paterson A.H."/>
            <person name="Johns M.A."/>
            <person name="Mao L."/>
            <person name="Pan H."/>
            <person name="Dean R.A."/>
        </authorList>
    </citation>
    <scope>NUCLEOTIDE SEQUENCE [LARGE SCALE GENOMIC DNA]</scope>
    <source>
        <strain>cv. Nipponbare</strain>
    </source>
</reference>
<reference key="2">
    <citation type="journal article" date="2005" name="Nature">
        <title>The map-based sequence of the rice genome.</title>
        <authorList>
            <consortium name="International rice genome sequencing project (IRGSP)"/>
        </authorList>
    </citation>
    <scope>NUCLEOTIDE SEQUENCE [LARGE SCALE GENOMIC DNA]</scope>
    <source>
        <strain>cv. Nipponbare</strain>
    </source>
</reference>
<reference key="3">
    <citation type="journal article" date="2008" name="Nucleic Acids Res.">
        <title>The rice annotation project database (RAP-DB): 2008 update.</title>
        <authorList>
            <consortium name="The rice annotation project (RAP)"/>
        </authorList>
    </citation>
    <scope>GENOME REANNOTATION</scope>
    <source>
        <strain>cv. Nipponbare</strain>
    </source>
</reference>
<reference key="4">
    <citation type="journal article" date="2013" name="Rice">
        <title>Improvement of the Oryza sativa Nipponbare reference genome using next generation sequence and optical map data.</title>
        <authorList>
            <person name="Kawahara Y."/>
            <person name="de la Bastide M."/>
            <person name="Hamilton J.P."/>
            <person name="Kanamori H."/>
            <person name="McCombie W.R."/>
            <person name="Ouyang S."/>
            <person name="Schwartz D.C."/>
            <person name="Tanaka T."/>
            <person name="Wu J."/>
            <person name="Zhou S."/>
            <person name="Childs K.L."/>
            <person name="Davidson R.M."/>
            <person name="Lin H."/>
            <person name="Quesada-Ocampo L."/>
            <person name="Vaillancourt B."/>
            <person name="Sakai H."/>
            <person name="Lee S.S."/>
            <person name="Kim J."/>
            <person name="Numa H."/>
            <person name="Itoh T."/>
            <person name="Buell C.R."/>
            <person name="Matsumoto T."/>
        </authorList>
    </citation>
    <scope>GENOME REANNOTATION</scope>
    <source>
        <strain>cv. Nipponbare</strain>
    </source>
</reference>
<reference key="5">
    <citation type="journal article" date="2005" name="PLoS Biol.">
        <title>The genomes of Oryza sativa: a history of duplications.</title>
        <authorList>
            <person name="Yu J."/>
            <person name="Wang J."/>
            <person name="Lin W."/>
            <person name="Li S."/>
            <person name="Li H."/>
            <person name="Zhou J."/>
            <person name="Ni P."/>
            <person name="Dong W."/>
            <person name="Hu S."/>
            <person name="Zeng C."/>
            <person name="Zhang J."/>
            <person name="Zhang Y."/>
            <person name="Li R."/>
            <person name="Xu Z."/>
            <person name="Li S."/>
            <person name="Li X."/>
            <person name="Zheng H."/>
            <person name="Cong L."/>
            <person name="Lin L."/>
            <person name="Yin J."/>
            <person name="Geng J."/>
            <person name="Li G."/>
            <person name="Shi J."/>
            <person name="Liu J."/>
            <person name="Lv H."/>
            <person name="Li J."/>
            <person name="Wang J."/>
            <person name="Deng Y."/>
            <person name="Ran L."/>
            <person name="Shi X."/>
            <person name="Wang X."/>
            <person name="Wu Q."/>
            <person name="Li C."/>
            <person name="Ren X."/>
            <person name="Wang J."/>
            <person name="Wang X."/>
            <person name="Li D."/>
            <person name="Liu D."/>
            <person name="Zhang X."/>
            <person name="Ji Z."/>
            <person name="Zhao W."/>
            <person name="Sun Y."/>
            <person name="Zhang Z."/>
            <person name="Bao J."/>
            <person name="Han Y."/>
            <person name="Dong L."/>
            <person name="Ji J."/>
            <person name="Chen P."/>
            <person name="Wu S."/>
            <person name="Liu J."/>
            <person name="Xiao Y."/>
            <person name="Bu D."/>
            <person name="Tan J."/>
            <person name="Yang L."/>
            <person name="Ye C."/>
            <person name="Zhang J."/>
            <person name="Xu J."/>
            <person name="Zhou Y."/>
            <person name="Yu Y."/>
            <person name="Zhang B."/>
            <person name="Zhuang S."/>
            <person name="Wei H."/>
            <person name="Liu B."/>
            <person name="Lei M."/>
            <person name="Yu H."/>
            <person name="Li Y."/>
            <person name="Xu H."/>
            <person name="Wei S."/>
            <person name="He X."/>
            <person name="Fang L."/>
            <person name="Zhang Z."/>
            <person name="Zhang Y."/>
            <person name="Huang X."/>
            <person name="Su Z."/>
            <person name="Tong W."/>
            <person name="Li J."/>
            <person name="Tong Z."/>
            <person name="Li S."/>
            <person name="Ye J."/>
            <person name="Wang L."/>
            <person name="Fang L."/>
            <person name="Lei T."/>
            <person name="Chen C.-S."/>
            <person name="Chen H.-C."/>
            <person name="Xu Z."/>
            <person name="Li H."/>
            <person name="Huang H."/>
            <person name="Zhang F."/>
            <person name="Xu H."/>
            <person name="Li N."/>
            <person name="Zhao C."/>
            <person name="Li S."/>
            <person name="Dong L."/>
            <person name="Huang Y."/>
            <person name="Li L."/>
            <person name="Xi Y."/>
            <person name="Qi Q."/>
            <person name="Li W."/>
            <person name="Zhang B."/>
            <person name="Hu W."/>
            <person name="Zhang Y."/>
            <person name="Tian X."/>
            <person name="Jiao Y."/>
            <person name="Liang X."/>
            <person name="Jin J."/>
            <person name="Gao L."/>
            <person name="Zheng W."/>
            <person name="Hao B."/>
            <person name="Liu S.-M."/>
            <person name="Wang W."/>
            <person name="Yuan L."/>
            <person name="Cao M."/>
            <person name="McDermott J."/>
            <person name="Samudrala R."/>
            <person name="Wang J."/>
            <person name="Wong G.K.-S."/>
            <person name="Yang H."/>
        </authorList>
    </citation>
    <scope>NUCLEOTIDE SEQUENCE [LARGE SCALE GENOMIC DNA]</scope>
    <source>
        <strain>cv. Nipponbare</strain>
    </source>
</reference>
<reference key="6">
    <citation type="journal article" date="2003" name="Science">
        <title>Collection, mapping, and annotation of over 28,000 cDNA clones from japonica rice.</title>
        <authorList>
            <consortium name="The rice full-length cDNA consortium"/>
        </authorList>
    </citation>
    <scope>NUCLEOTIDE SEQUENCE [LARGE SCALE MRNA]</scope>
    <source>
        <strain>cv. Nipponbare</strain>
    </source>
</reference>
<feature type="chain" id="PRO_0000419149" description="Long chain base biosynthesis protein 1c">
    <location>
        <begin position="1"/>
        <end position="482"/>
    </location>
</feature>
<feature type="transmembrane region" description="Helical" evidence="2">
    <location>
        <begin position="33"/>
        <end position="53"/>
    </location>
</feature>
<feature type="sequence conflict" description="In Ref. 6; AK100991." evidence="3" ref="6">
    <original>D</original>
    <variation>N</variation>
    <location>
        <position position="157"/>
    </location>
</feature>
<proteinExistence type="evidence at transcript level"/>
<gene>
    <name type="ordered locus">Os10g0189600</name>
    <name type="ordered locus">LOC_Os10g11200</name>
    <name type="ORF">OsJ_30932</name>
    <name type="ORF">OSJNBa0079H13</name>
</gene>
<comment type="function">
    <text evidence="1">Serine palmitoyltransferase (SPT). The heterodimer formed with LCB2 constitutes the catalytic core (By similarity).</text>
</comment>
<comment type="catalytic activity">
    <reaction>
        <text>L-serine + hexadecanoyl-CoA + H(+) = 3-oxosphinganine + CO2 + CoA</text>
        <dbReference type="Rhea" id="RHEA:14761"/>
        <dbReference type="ChEBI" id="CHEBI:15378"/>
        <dbReference type="ChEBI" id="CHEBI:16526"/>
        <dbReference type="ChEBI" id="CHEBI:33384"/>
        <dbReference type="ChEBI" id="CHEBI:57287"/>
        <dbReference type="ChEBI" id="CHEBI:57379"/>
        <dbReference type="ChEBI" id="CHEBI:58299"/>
        <dbReference type="EC" id="2.3.1.50"/>
    </reaction>
</comment>
<comment type="cofactor">
    <cofactor evidence="1">
        <name>pyridoxal 5'-phosphate</name>
        <dbReference type="ChEBI" id="CHEBI:597326"/>
    </cofactor>
</comment>
<comment type="pathway">
    <text>Lipid metabolism; sphingolipid metabolism.</text>
</comment>
<comment type="subunit">
    <text evidence="1">Heterodimer with LCB2. Component of the serine palmitoyltransferase (SPT) complex, composed of LCB1 and LCB2 (By similarity).</text>
</comment>
<comment type="subcellular location">
    <subcellularLocation>
        <location evidence="1">Endoplasmic reticulum membrane</location>
        <topology evidence="1">Single-pass membrane protein</topology>
    </subcellularLocation>
</comment>
<comment type="similarity">
    <text evidence="3">Belongs to the class-II pyridoxal-phosphate-dependent aminotransferase family.</text>
</comment>
<comment type="sequence caution" evidence="3">
    <conflict type="erroneous gene model prediction">
        <sequence resource="EMBL-CDS" id="AAX95555"/>
    </conflict>
</comment>
<comment type="sequence caution" evidence="3">
    <conflict type="erroneous gene model prediction">
        <sequence resource="EMBL-CDS" id="EEE50683"/>
    </conflict>
</comment>
<dbReference type="EC" id="2.3.1.50"/>
<dbReference type="EMBL" id="AC104616">
    <property type="protein sequence ID" value="AAX95555.1"/>
    <property type="status" value="ALT_SEQ"/>
    <property type="molecule type" value="Genomic_DNA"/>
</dbReference>
<dbReference type="EMBL" id="DP000086">
    <property type="protein sequence ID" value="AAP52538.2"/>
    <property type="molecule type" value="Genomic_DNA"/>
</dbReference>
<dbReference type="EMBL" id="AP008216">
    <property type="protein sequence ID" value="BAF26186.1"/>
    <property type="molecule type" value="Genomic_DNA"/>
</dbReference>
<dbReference type="EMBL" id="AP014966">
    <property type="protein sequence ID" value="BAT10181.1"/>
    <property type="molecule type" value="Genomic_DNA"/>
</dbReference>
<dbReference type="EMBL" id="CM000147">
    <property type="protein sequence ID" value="EEE50683.1"/>
    <property type="status" value="ALT_SEQ"/>
    <property type="molecule type" value="Genomic_DNA"/>
</dbReference>
<dbReference type="EMBL" id="AK100991">
    <property type="status" value="NOT_ANNOTATED_CDS"/>
    <property type="molecule type" value="mRNA"/>
</dbReference>
<dbReference type="RefSeq" id="XP_015612907.1">
    <property type="nucleotide sequence ID" value="XM_015757421.1"/>
</dbReference>
<dbReference type="SMR" id="Q7G4P2"/>
<dbReference type="FunCoup" id="Q7G4P2">
    <property type="interactions" value="3313"/>
</dbReference>
<dbReference type="STRING" id="39947.Q7G4P2"/>
<dbReference type="PaxDb" id="39947-Q7G4P2"/>
<dbReference type="EnsemblPlants" id="Os10t0189600-01">
    <property type="protein sequence ID" value="Os10t0189600-01"/>
    <property type="gene ID" value="Os10g0189600"/>
</dbReference>
<dbReference type="EnsemblPlants" id="Os10t0189600-02">
    <property type="protein sequence ID" value="Os10t0189600-02"/>
    <property type="gene ID" value="Os10g0189600"/>
</dbReference>
<dbReference type="Gramene" id="Os10t0189600-01">
    <property type="protein sequence ID" value="Os10t0189600-01"/>
    <property type="gene ID" value="Os10g0189600"/>
</dbReference>
<dbReference type="Gramene" id="Os10t0189600-02">
    <property type="protein sequence ID" value="Os10t0189600-02"/>
    <property type="gene ID" value="Os10g0189600"/>
</dbReference>
<dbReference type="KEGG" id="dosa:Os10g0189600"/>
<dbReference type="eggNOG" id="KOG1358">
    <property type="taxonomic scope" value="Eukaryota"/>
</dbReference>
<dbReference type="HOGENOM" id="CLU_015846_0_1_1"/>
<dbReference type="InParanoid" id="Q7G4P2"/>
<dbReference type="OMA" id="MMEMVLP"/>
<dbReference type="OrthoDB" id="3168162at2759"/>
<dbReference type="PlantReactome" id="R-OSA-1119325">
    <property type="pathway name" value="Sphingolipid metabolism"/>
</dbReference>
<dbReference type="PlantReactome" id="R-OSA-1119610">
    <property type="pathway name" value="Biotin biosynthesis II"/>
</dbReference>
<dbReference type="UniPathway" id="UPA00222"/>
<dbReference type="Proteomes" id="UP000000763">
    <property type="component" value="Chromosome 10"/>
</dbReference>
<dbReference type="Proteomes" id="UP000007752">
    <property type="component" value="Chromosome 10"/>
</dbReference>
<dbReference type="Proteomes" id="UP000059680">
    <property type="component" value="Chromosome 10"/>
</dbReference>
<dbReference type="GO" id="GO:0005783">
    <property type="term" value="C:endoplasmic reticulum"/>
    <property type="evidence" value="ECO:0000318"/>
    <property type="project" value="GO_Central"/>
</dbReference>
<dbReference type="GO" id="GO:0005789">
    <property type="term" value="C:endoplasmic reticulum membrane"/>
    <property type="evidence" value="ECO:0007669"/>
    <property type="project" value="UniProtKB-SubCell"/>
</dbReference>
<dbReference type="GO" id="GO:0030170">
    <property type="term" value="F:pyridoxal phosphate binding"/>
    <property type="evidence" value="ECO:0007669"/>
    <property type="project" value="InterPro"/>
</dbReference>
<dbReference type="GO" id="GO:0004758">
    <property type="term" value="F:serine C-palmitoyltransferase activity"/>
    <property type="evidence" value="ECO:0000318"/>
    <property type="project" value="GO_Central"/>
</dbReference>
<dbReference type="GO" id="GO:0046513">
    <property type="term" value="P:ceramide biosynthetic process"/>
    <property type="evidence" value="ECO:0000318"/>
    <property type="project" value="GO_Central"/>
</dbReference>
<dbReference type="GO" id="GO:0046512">
    <property type="term" value="P:sphingosine biosynthetic process"/>
    <property type="evidence" value="ECO:0000318"/>
    <property type="project" value="GO_Central"/>
</dbReference>
<dbReference type="FunFam" id="3.40.640.10:FF:000049">
    <property type="entry name" value="serine palmitoyltransferase 1 isoform X1"/>
    <property type="match status" value="1"/>
</dbReference>
<dbReference type="Gene3D" id="3.90.1150.10">
    <property type="entry name" value="Aspartate Aminotransferase, domain 1"/>
    <property type="match status" value="1"/>
</dbReference>
<dbReference type="Gene3D" id="3.40.640.10">
    <property type="entry name" value="Type I PLP-dependent aspartate aminotransferase-like (Major domain)"/>
    <property type="match status" value="1"/>
</dbReference>
<dbReference type="InterPro" id="IPR004839">
    <property type="entry name" value="Aminotransferase_I/II_large"/>
</dbReference>
<dbReference type="InterPro" id="IPR050087">
    <property type="entry name" value="AON_synthase_class-II"/>
</dbReference>
<dbReference type="InterPro" id="IPR015424">
    <property type="entry name" value="PyrdxlP-dep_Trfase"/>
</dbReference>
<dbReference type="InterPro" id="IPR015421">
    <property type="entry name" value="PyrdxlP-dep_Trfase_major"/>
</dbReference>
<dbReference type="InterPro" id="IPR015422">
    <property type="entry name" value="PyrdxlP-dep_Trfase_small"/>
</dbReference>
<dbReference type="PANTHER" id="PTHR13693">
    <property type="entry name" value="CLASS II AMINOTRANSFERASE/8-AMINO-7-OXONONANOATE SYNTHASE"/>
    <property type="match status" value="1"/>
</dbReference>
<dbReference type="PANTHER" id="PTHR13693:SF2">
    <property type="entry name" value="SERINE PALMITOYLTRANSFERASE 1"/>
    <property type="match status" value="1"/>
</dbReference>
<dbReference type="Pfam" id="PF00155">
    <property type="entry name" value="Aminotran_1_2"/>
    <property type="match status" value="1"/>
</dbReference>
<dbReference type="SUPFAM" id="SSF53383">
    <property type="entry name" value="PLP-dependent transferases"/>
    <property type="match status" value="1"/>
</dbReference>
<name>LCB1C_ORYSJ</name>
<keyword id="KW-0012">Acyltransferase</keyword>
<keyword id="KW-0256">Endoplasmic reticulum</keyword>
<keyword id="KW-0443">Lipid metabolism</keyword>
<keyword id="KW-0472">Membrane</keyword>
<keyword id="KW-0663">Pyridoxal phosphate</keyword>
<keyword id="KW-1185">Reference proteome</keyword>
<keyword id="KW-0746">Sphingolipid metabolism</keyword>
<keyword id="KW-0808">Transferase</keyword>
<keyword id="KW-0812">Transmembrane</keyword>
<keyword id="KW-1133">Transmembrane helix</keyword>
<organism>
    <name type="scientific">Oryza sativa subsp. japonica</name>
    <name type="common">Rice</name>
    <dbReference type="NCBI Taxonomy" id="39947"/>
    <lineage>
        <taxon>Eukaryota</taxon>
        <taxon>Viridiplantae</taxon>
        <taxon>Streptophyta</taxon>
        <taxon>Embryophyta</taxon>
        <taxon>Tracheophyta</taxon>
        <taxon>Spermatophyta</taxon>
        <taxon>Magnoliopsida</taxon>
        <taxon>Liliopsida</taxon>
        <taxon>Poales</taxon>
        <taxon>Poaceae</taxon>
        <taxon>BOP clade</taxon>
        <taxon>Oryzoideae</taxon>
        <taxon>Oryzeae</taxon>
        <taxon>Oryzinae</taxon>
        <taxon>Oryza</taxon>
        <taxon>Oryza sativa</taxon>
    </lineage>
</organism>
<sequence>MMEMVLPVANATAAALARVSAVFNAPLARAVVFGIHIDGHLVVEGLLIAAILFQLSRKSYKPPKKPLTEREVDELCDDWQPEPLCPPIKEGARIDTPTLESAAGPHTTVDGKEVVNFASANYLGLIGNEKIIDSCVGSVEKYGVGSCGPRSFYGTIDVHLDCESKIANFLGTQDSILYSYGISTIFSVIPAFCKKGDIIVADEGVHWAVQNGLQLSRSTVVYFKHNDMASLASILEKLTHGNKHTEKIRRYIVVEAIYQNSGQIAPLDEIVRLKEKYRFRVILEESHSFGVLGKSGRGLAEHYGVPVEKIDIITAGMGNALATDGGFCTGSVRVVDHQRLSSSGYVFSASLPPYLASAAMSAVNHLEENPSVLANLRSNIALLHKELSDIPGLEIASNILSPIVFLKLKTPTGSAVADLELLEIIAEKVLMEDSVFIAATKRSSLDKCRLPVGIRLFVSAGHTESDIFKVSASLKRVAASVV</sequence>